<keyword id="KW-0067">ATP-binding</keyword>
<keyword id="KW-0418">Kinase</keyword>
<keyword id="KW-0479">Metal-binding</keyword>
<keyword id="KW-0547">Nucleotide-binding</keyword>
<keyword id="KW-0597">Phosphoprotein</keyword>
<keyword id="KW-0656">Proto-oncogene</keyword>
<keyword id="KW-1185">Reference proteome</keyword>
<keyword id="KW-0723">Serine/threonine-protein kinase</keyword>
<keyword id="KW-0808">Transferase</keyword>
<keyword id="KW-0862">Zinc</keyword>
<keyword id="KW-0863">Zinc-finger</keyword>
<dbReference type="EC" id="2.7.11.1"/>
<dbReference type="EMBL" id="AL671885">
    <property type="status" value="NOT_ANNOTATED_CDS"/>
    <property type="molecule type" value="Genomic_DNA"/>
</dbReference>
<dbReference type="EMBL" id="BC004757">
    <property type="protein sequence ID" value="AAH04757.1"/>
    <property type="molecule type" value="mRNA"/>
</dbReference>
<dbReference type="EMBL" id="AK004741">
    <property type="protein sequence ID" value="BAB23522.1"/>
    <property type="molecule type" value="mRNA"/>
</dbReference>
<dbReference type="EMBL" id="AK010060">
    <property type="protein sequence ID" value="BAB26674.1"/>
    <property type="molecule type" value="mRNA"/>
</dbReference>
<dbReference type="EMBL" id="AK020547">
    <property type="protein sequence ID" value="BAB32131.3"/>
    <property type="molecule type" value="mRNA"/>
</dbReference>
<dbReference type="EMBL" id="D00024">
    <property type="protein sequence ID" value="BAA00018.1"/>
    <property type="molecule type" value="mRNA"/>
</dbReference>
<dbReference type="CCDS" id="CCDS40886.1"/>
<dbReference type="PIR" id="A25382">
    <property type="entry name" value="TVMSRF"/>
</dbReference>
<dbReference type="RefSeq" id="NP_001153117.1">
    <property type="nucleotide sequence ID" value="NM_001159645.1"/>
</dbReference>
<dbReference type="RefSeq" id="NP_033833.1">
    <property type="nucleotide sequence ID" value="NM_009703.2"/>
</dbReference>
<dbReference type="RefSeq" id="XP_006527619.1">
    <property type="nucleotide sequence ID" value="XM_006527556.4"/>
</dbReference>
<dbReference type="RefSeq" id="XP_006527620.1">
    <property type="nucleotide sequence ID" value="XM_006527557.4"/>
</dbReference>
<dbReference type="RefSeq" id="XP_030107064.1">
    <property type="nucleotide sequence ID" value="XM_030251204.1"/>
</dbReference>
<dbReference type="BMRB" id="P04627"/>
<dbReference type="SMR" id="P04627"/>
<dbReference type="BioGRID" id="198180">
    <property type="interactions" value="7"/>
</dbReference>
<dbReference type="DIP" id="DIP-1070N"/>
<dbReference type="FunCoup" id="P04627">
    <property type="interactions" value="4023"/>
</dbReference>
<dbReference type="IntAct" id="P04627">
    <property type="interactions" value="6"/>
</dbReference>
<dbReference type="MINT" id="P04627"/>
<dbReference type="STRING" id="10090.ENSMUSP00000001155"/>
<dbReference type="GlyGen" id="P04627">
    <property type="glycosylation" value="1 site, 1 O-linked glycan (1 site)"/>
</dbReference>
<dbReference type="iPTMnet" id="P04627"/>
<dbReference type="PhosphoSitePlus" id="P04627"/>
<dbReference type="SwissPalm" id="P04627"/>
<dbReference type="CPTAC" id="non-CPTAC-3958"/>
<dbReference type="jPOST" id="P04627"/>
<dbReference type="PaxDb" id="10090-ENSMUSP00000001155"/>
<dbReference type="PeptideAtlas" id="P04627"/>
<dbReference type="ProteomicsDB" id="282008"/>
<dbReference type="Pumba" id="P04627"/>
<dbReference type="Antibodypedia" id="11388">
    <property type="antibodies" value="707 antibodies from 39 providers"/>
</dbReference>
<dbReference type="DNASU" id="11836"/>
<dbReference type="Ensembl" id="ENSMUST00000001155.11">
    <property type="protein sequence ID" value="ENSMUSP00000001155.5"/>
    <property type="gene ID" value="ENSMUSG00000001127.13"/>
</dbReference>
<dbReference type="GeneID" id="11836"/>
<dbReference type="KEGG" id="mmu:11836"/>
<dbReference type="UCSC" id="uc009stt.2">
    <property type="organism name" value="mouse"/>
</dbReference>
<dbReference type="AGR" id="MGI:88065"/>
<dbReference type="CTD" id="369"/>
<dbReference type="MGI" id="MGI:88065">
    <property type="gene designation" value="Araf"/>
</dbReference>
<dbReference type="VEuPathDB" id="HostDB:ENSMUSG00000001127"/>
<dbReference type="eggNOG" id="KOG0193">
    <property type="taxonomic scope" value="Eukaryota"/>
</dbReference>
<dbReference type="GeneTree" id="ENSGT00940000159633"/>
<dbReference type="HOGENOM" id="CLU_023684_1_1_1"/>
<dbReference type="InParanoid" id="P04627"/>
<dbReference type="OMA" id="EMCVVYI"/>
<dbReference type="OrthoDB" id="774951at2759"/>
<dbReference type="PhylomeDB" id="P04627"/>
<dbReference type="TreeFam" id="TF317006"/>
<dbReference type="BRENDA" id="2.7.10.2">
    <property type="organism ID" value="3474"/>
</dbReference>
<dbReference type="Reactome" id="R-MMU-5673000">
    <property type="pathway name" value="RAF activation"/>
</dbReference>
<dbReference type="Reactome" id="R-MMU-5674135">
    <property type="pathway name" value="MAP2K and MAPK activation"/>
</dbReference>
<dbReference type="Reactome" id="R-MMU-5675221">
    <property type="pathway name" value="Negative regulation of MAPK pathway"/>
</dbReference>
<dbReference type="BioGRID-ORCS" id="11836">
    <property type="hits" value="2 hits in 80 CRISPR screens"/>
</dbReference>
<dbReference type="ChiTaRS" id="Araf">
    <property type="organism name" value="mouse"/>
</dbReference>
<dbReference type="PRO" id="PR:P04627"/>
<dbReference type="Proteomes" id="UP000000589">
    <property type="component" value="Chromosome X"/>
</dbReference>
<dbReference type="RNAct" id="P04627">
    <property type="molecule type" value="protein"/>
</dbReference>
<dbReference type="Bgee" id="ENSMUSG00000001127">
    <property type="expression patterns" value="Expressed in embryonic brain and 252 other cell types or tissues"/>
</dbReference>
<dbReference type="ExpressionAtlas" id="P04627">
    <property type="expression patterns" value="baseline and differential"/>
</dbReference>
<dbReference type="GO" id="GO:0005739">
    <property type="term" value="C:mitochondrion"/>
    <property type="evidence" value="ECO:0000314"/>
    <property type="project" value="MGI"/>
</dbReference>
<dbReference type="GO" id="GO:0005524">
    <property type="term" value="F:ATP binding"/>
    <property type="evidence" value="ECO:0007669"/>
    <property type="project" value="UniProtKB-KW"/>
</dbReference>
<dbReference type="GO" id="GO:0004709">
    <property type="term" value="F:MAP kinase kinase kinase activity"/>
    <property type="evidence" value="ECO:0007669"/>
    <property type="project" value="Ensembl"/>
</dbReference>
<dbReference type="GO" id="GO:0106310">
    <property type="term" value="F:protein serine kinase activity"/>
    <property type="evidence" value="ECO:0007669"/>
    <property type="project" value="RHEA"/>
</dbReference>
<dbReference type="GO" id="GO:0008270">
    <property type="term" value="F:zinc ion binding"/>
    <property type="evidence" value="ECO:0007669"/>
    <property type="project" value="UniProtKB-KW"/>
</dbReference>
<dbReference type="GO" id="GO:0043066">
    <property type="term" value="P:negative regulation of apoptotic process"/>
    <property type="evidence" value="ECO:0007669"/>
    <property type="project" value="Ensembl"/>
</dbReference>
<dbReference type="GO" id="GO:0032434">
    <property type="term" value="P:regulation of proteasomal ubiquitin-dependent protein catabolic process"/>
    <property type="evidence" value="ECO:0000250"/>
    <property type="project" value="UniProtKB"/>
</dbReference>
<dbReference type="GO" id="GO:0032006">
    <property type="term" value="P:regulation of TOR signaling"/>
    <property type="evidence" value="ECO:0000250"/>
    <property type="project" value="UniProtKB"/>
</dbReference>
<dbReference type="CDD" id="cd20870">
    <property type="entry name" value="C1_A_C-Raf"/>
    <property type="match status" value="1"/>
</dbReference>
<dbReference type="CDD" id="cd17133">
    <property type="entry name" value="RBD_ARAF"/>
    <property type="match status" value="1"/>
</dbReference>
<dbReference type="FunFam" id="3.10.20.90:FF:000015">
    <property type="entry name" value="B-Raf proto-oncogene serine/threonine-protein kinase"/>
    <property type="match status" value="1"/>
</dbReference>
<dbReference type="FunFam" id="3.30.200.20:FF:000024">
    <property type="entry name" value="B-Raf proto-oncogene serine/threonine-protein kinase"/>
    <property type="match status" value="1"/>
</dbReference>
<dbReference type="FunFam" id="3.30.60.20:FF:000004">
    <property type="entry name" value="B-Raf proto-oncogene serine/threonine-protein kinase"/>
    <property type="match status" value="1"/>
</dbReference>
<dbReference type="FunFam" id="1.10.510.10:FF:000036">
    <property type="entry name" value="RAF proto-oncogene serine/threonine-protein kinase"/>
    <property type="match status" value="1"/>
</dbReference>
<dbReference type="Gene3D" id="3.30.60.20">
    <property type="match status" value="1"/>
</dbReference>
<dbReference type="Gene3D" id="3.10.20.90">
    <property type="entry name" value="Phosphatidylinositol 3-kinase Catalytic Subunit, Chain A, domain 1"/>
    <property type="match status" value="1"/>
</dbReference>
<dbReference type="Gene3D" id="3.30.200.20">
    <property type="entry name" value="Phosphorylase Kinase, domain 1"/>
    <property type="match status" value="1"/>
</dbReference>
<dbReference type="Gene3D" id="1.10.510.10">
    <property type="entry name" value="Transferase(Phosphotransferase) domain 1"/>
    <property type="match status" value="1"/>
</dbReference>
<dbReference type="InterPro" id="IPR046349">
    <property type="entry name" value="C1-like_sf"/>
</dbReference>
<dbReference type="InterPro" id="IPR020454">
    <property type="entry name" value="DAG/PE-bd"/>
</dbReference>
<dbReference type="InterPro" id="IPR011009">
    <property type="entry name" value="Kinase-like_dom_sf"/>
</dbReference>
<dbReference type="InterPro" id="IPR002219">
    <property type="entry name" value="PE/DAG-bd"/>
</dbReference>
<dbReference type="InterPro" id="IPR000719">
    <property type="entry name" value="Prot_kinase_dom"/>
</dbReference>
<dbReference type="InterPro" id="IPR017441">
    <property type="entry name" value="Protein_kinase_ATP_BS"/>
</dbReference>
<dbReference type="InterPro" id="IPR003116">
    <property type="entry name" value="RBD_dom"/>
</dbReference>
<dbReference type="InterPro" id="IPR001245">
    <property type="entry name" value="Ser-Thr/Tyr_kinase_cat_dom"/>
</dbReference>
<dbReference type="InterPro" id="IPR008271">
    <property type="entry name" value="Ser/Thr_kinase_AS"/>
</dbReference>
<dbReference type="InterPro" id="IPR051681">
    <property type="entry name" value="Ser/Thr_Kinases-Pseudokinases"/>
</dbReference>
<dbReference type="InterPro" id="IPR029071">
    <property type="entry name" value="Ubiquitin-like_domsf"/>
</dbReference>
<dbReference type="PANTHER" id="PTHR44329">
    <property type="entry name" value="SERINE/THREONINE-PROTEIN KINASE TNNI3K-RELATED"/>
    <property type="match status" value="1"/>
</dbReference>
<dbReference type="PANTHER" id="PTHR44329:SF55">
    <property type="entry name" value="SERINE_THREONINE-PROTEIN KINASE A-RAF"/>
    <property type="match status" value="1"/>
</dbReference>
<dbReference type="Pfam" id="PF00130">
    <property type="entry name" value="C1_1"/>
    <property type="match status" value="1"/>
</dbReference>
<dbReference type="Pfam" id="PF07714">
    <property type="entry name" value="PK_Tyr_Ser-Thr"/>
    <property type="match status" value="1"/>
</dbReference>
<dbReference type="Pfam" id="PF02196">
    <property type="entry name" value="RBD"/>
    <property type="match status" value="1"/>
</dbReference>
<dbReference type="PRINTS" id="PR00008">
    <property type="entry name" value="DAGPEDOMAIN"/>
</dbReference>
<dbReference type="SMART" id="SM00109">
    <property type="entry name" value="C1"/>
    <property type="match status" value="1"/>
</dbReference>
<dbReference type="SMART" id="SM00455">
    <property type="entry name" value="RBD"/>
    <property type="match status" value="1"/>
</dbReference>
<dbReference type="SMART" id="SM00220">
    <property type="entry name" value="S_TKc"/>
    <property type="match status" value="1"/>
</dbReference>
<dbReference type="SUPFAM" id="SSF57889">
    <property type="entry name" value="Cysteine-rich domain"/>
    <property type="match status" value="1"/>
</dbReference>
<dbReference type="SUPFAM" id="SSF56112">
    <property type="entry name" value="Protein kinase-like (PK-like)"/>
    <property type="match status" value="1"/>
</dbReference>
<dbReference type="SUPFAM" id="SSF54236">
    <property type="entry name" value="Ubiquitin-like"/>
    <property type="match status" value="1"/>
</dbReference>
<dbReference type="PROSITE" id="PS00107">
    <property type="entry name" value="PROTEIN_KINASE_ATP"/>
    <property type="match status" value="1"/>
</dbReference>
<dbReference type="PROSITE" id="PS50011">
    <property type="entry name" value="PROTEIN_KINASE_DOM"/>
    <property type="match status" value="1"/>
</dbReference>
<dbReference type="PROSITE" id="PS00108">
    <property type="entry name" value="PROTEIN_KINASE_ST"/>
    <property type="match status" value="1"/>
</dbReference>
<dbReference type="PROSITE" id="PS50898">
    <property type="entry name" value="RBD"/>
    <property type="match status" value="1"/>
</dbReference>
<dbReference type="PROSITE" id="PS00479">
    <property type="entry name" value="ZF_DAG_PE_1"/>
    <property type="match status" value="1"/>
</dbReference>
<dbReference type="PROSITE" id="PS50081">
    <property type="entry name" value="ZF_DAG_PE_2"/>
    <property type="match status" value="1"/>
</dbReference>
<evidence type="ECO:0000250" key="1"/>
<evidence type="ECO:0000250" key="2">
    <source>
        <dbReference type="UniProtKB" id="P10398"/>
    </source>
</evidence>
<evidence type="ECO:0000255" key="3">
    <source>
        <dbReference type="PROSITE-ProRule" id="PRU00159"/>
    </source>
</evidence>
<evidence type="ECO:0000255" key="4">
    <source>
        <dbReference type="PROSITE-ProRule" id="PRU00226"/>
    </source>
</evidence>
<evidence type="ECO:0000255" key="5">
    <source>
        <dbReference type="PROSITE-ProRule" id="PRU00262"/>
    </source>
</evidence>
<evidence type="ECO:0000255" key="6">
    <source>
        <dbReference type="PROSITE-ProRule" id="PRU10027"/>
    </source>
</evidence>
<evidence type="ECO:0000256" key="7">
    <source>
        <dbReference type="SAM" id="MobiDB-lite"/>
    </source>
</evidence>
<evidence type="ECO:0000305" key="8"/>
<evidence type="ECO:0007744" key="9">
    <source>
    </source>
</evidence>
<proteinExistence type="evidence at protein level"/>
<name>ARAF_MOUSE</name>
<comment type="function">
    <text evidence="2">Involved in the transduction of mitogenic signals from the cell membrane to the nucleus. May also regulate the TOR signaling cascade (By similarity). Phosphorylates PFKFB2 (By similarity).</text>
</comment>
<comment type="catalytic activity">
    <reaction>
        <text>L-seryl-[protein] + ATP = O-phospho-L-seryl-[protein] + ADP + H(+)</text>
        <dbReference type="Rhea" id="RHEA:17989"/>
        <dbReference type="Rhea" id="RHEA-COMP:9863"/>
        <dbReference type="Rhea" id="RHEA-COMP:11604"/>
        <dbReference type="ChEBI" id="CHEBI:15378"/>
        <dbReference type="ChEBI" id="CHEBI:29999"/>
        <dbReference type="ChEBI" id="CHEBI:30616"/>
        <dbReference type="ChEBI" id="CHEBI:83421"/>
        <dbReference type="ChEBI" id="CHEBI:456216"/>
        <dbReference type="EC" id="2.7.11.1"/>
    </reaction>
</comment>
<comment type="catalytic activity">
    <reaction>
        <text>L-threonyl-[protein] + ATP = O-phospho-L-threonyl-[protein] + ADP + H(+)</text>
        <dbReference type="Rhea" id="RHEA:46608"/>
        <dbReference type="Rhea" id="RHEA-COMP:11060"/>
        <dbReference type="Rhea" id="RHEA-COMP:11605"/>
        <dbReference type="ChEBI" id="CHEBI:15378"/>
        <dbReference type="ChEBI" id="CHEBI:30013"/>
        <dbReference type="ChEBI" id="CHEBI:30616"/>
        <dbReference type="ChEBI" id="CHEBI:61977"/>
        <dbReference type="ChEBI" id="CHEBI:456216"/>
        <dbReference type="EC" id="2.7.11.1"/>
    </reaction>
</comment>
<comment type="cofactor">
    <cofactor evidence="1">
        <name>Zn(2+)</name>
        <dbReference type="ChEBI" id="CHEBI:29105"/>
    </cofactor>
    <text evidence="1">Binds 2 Zn(2+) ions per subunit.</text>
</comment>
<comment type="subunit">
    <text evidence="1">Interacts with TH1L/NELFD.</text>
</comment>
<comment type="PTM">
    <text evidence="2">Dephosphorylation by the SHOC2-MRAS-PP1c (SMP) complex consisting of SHOC2, GTP-bound M-Ras/MRAS and the catalytic subunit of protein phosphatase 1 (PPP1CA, PPP1CB or PPP1CC); this relieves inactivation and stimulates kinase activity.</text>
</comment>
<comment type="similarity">
    <text evidence="8">Belongs to the protein kinase superfamily. TKL Ser/Thr protein kinase family. RAF subfamily.</text>
</comment>
<accession>P04627</accession>
<accession>B1AUN9</accession>
<accession>Q99J44</accession>
<accession>Q9CTT5</accession>
<accession>Q9D6R6</accession>
<accession>Q9DBU7</accession>
<organism>
    <name type="scientific">Mus musculus</name>
    <name type="common">Mouse</name>
    <dbReference type="NCBI Taxonomy" id="10090"/>
    <lineage>
        <taxon>Eukaryota</taxon>
        <taxon>Metazoa</taxon>
        <taxon>Chordata</taxon>
        <taxon>Craniata</taxon>
        <taxon>Vertebrata</taxon>
        <taxon>Euteleostomi</taxon>
        <taxon>Mammalia</taxon>
        <taxon>Eutheria</taxon>
        <taxon>Euarchontoglires</taxon>
        <taxon>Glires</taxon>
        <taxon>Rodentia</taxon>
        <taxon>Myomorpha</taxon>
        <taxon>Muroidea</taxon>
        <taxon>Muridae</taxon>
        <taxon>Murinae</taxon>
        <taxon>Mus</taxon>
        <taxon>Mus</taxon>
    </lineage>
</organism>
<feature type="chain" id="PRO_0000085623" description="Serine/threonine-protein kinase A-Raf">
    <location>
        <begin position="1"/>
        <end position="604"/>
    </location>
</feature>
<feature type="domain" description="RBD" evidence="5">
    <location>
        <begin position="19"/>
        <end position="91"/>
    </location>
</feature>
<feature type="domain" description="Protein kinase" evidence="3">
    <location>
        <begin position="308"/>
        <end position="568"/>
    </location>
</feature>
<feature type="zinc finger region" description="Phorbol-ester/DAG-type" evidence="4">
    <location>
        <begin position="98"/>
        <end position="144"/>
    </location>
</feature>
<feature type="region of interest" description="Disordered" evidence="7">
    <location>
        <begin position="177"/>
        <end position="222"/>
    </location>
</feature>
<feature type="region of interest" description="Disordered" evidence="7">
    <location>
        <begin position="241"/>
        <end position="288"/>
    </location>
</feature>
<feature type="compositionally biased region" description="Polar residues" evidence="7">
    <location>
        <begin position="210"/>
        <end position="222"/>
    </location>
</feature>
<feature type="compositionally biased region" description="Low complexity" evidence="7">
    <location>
        <begin position="252"/>
        <end position="265"/>
    </location>
</feature>
<feature type="compositionally biased region" description="Basic and acidic residues" evidence="7">
    <location>
        <begin position="272"/>
        <end position="287"/>
    </location>
</feature>
<feature type="active site" description="Proton acceptor" evidence="3 6">
    <location>
        <position position="427"/>
    </location>
</feature>
<feature type="binding site" evidence="1">
    <location>
        <position position="99"/>
    </location>
    <ligand>
        <name>Zn(2+)</name>
        <dbReference type="ChEBI" id="CHEBI:29105"/>
        <label>1</label>
    </ligand>
</feature>
<feature type="binding site" evidence="1">
    <location>
        <position position="112"/>
    </location>
    <ligand>
        <name>Zn(2+)</name>
        <dbReference type="ChEBI" id="CHEBI:29105"/>
        <label>2</label>
    </ligand>
</feature>
<feature type="binding site" evidence="1">
    <location>
        <position position="115"/>
    </location>
    <ligand>
        <name>Zn(2+)</name>
        <dbReference type="ChEBI" id="CHEBI:29105"/>
        <label>2</label>
    </ligand>
</feature>
<feature type="binding site" evidence="1">
    <location>
        <position position="125"/>
    </location>
    <ligand>
        <name>Zn(2+)</name>
        <dbReference type="ChEBI" id="CHEBI:29105"/>
        <label>1</label>
    </ligand>
</feature>
<feature type="binding site" evidence="1">
    <location>
        <position position="128"/>
    </location>
    <ligand>
        <name>Zn(2+)</name>
        <dbReference type="ChEBI" id="CHEBI:29105"/>
        <label>1</label>
    </ligand>
</feature>
<feature type="binding site" evidence="1">
    <location>
        <position position="133"/>
    </location>
    <ligand>
        <name>Zn(2+)</name>
        <dbReference type="ChEBI" id="CHEBI:29105"/>
        <label>2</label>
    </ligand>
</feature>
<feature type="binding site" evidence="1">
    <location>
        <position position="136"/>
    </location>
    <ligand>
        <name>Zn(2+)</name>
        <dbReference type="ChEBI" id="CHEBI:29105"/>
        <label>2</label>
    </ligand>
</feature>
<feature type="binding site" evidence="1">
    <location>
        <position position="144"/>
    </location>
    <ligand>
        <name>Zn(2+)</name>
        <dbReference type="ChEBI" id="CHEBI:29105"/>
        <label>1</label>
    </ligand>
</feature>
<feature type="binding site" evidence="3">
    <location>
        <begin position="314"/>
        <end position="322"/>
    </location>
    <ligand>
        <name>ATP</name>
        <dbReference type="ChEBI" id="CHEBI:30616"/>
    </ligand>
</feature>
<feature type="binding site" evidence="3">
    <location>
        <position position="334"/>
    </location>
    <ligand>
        <name>ATP</name>
        <dbReference type="ChEBI" id="CHEBI:30616"/>
    </ligand>
</feature>
<feature type="modified residue" description="Phosphoserine" evidence="9">
    <location>
        <position position="157"/>
    </location>
</feature>
<feature type="modified residue" description="Phosphoserine" evidence="2">
    <location>
        <position position="162"/>
    </location>
</feature>
<feature type="modified residue" description="Phosphothreonine" evidence="9">
    <location>
        <position position="181"/>
    </location>
</feature>
<feature type="modified residue" description="Phosphoserine" evidence="2">
    <location>
        <position position="186"/>
    </location>
</feature>
<feature type="modified residue" description="Phosphoserine" evidence="2">
    <location>
        <position position="255"/>
    </location>
</feature>
<feature type="modified residue" description="Phosphoserine" evidence="2">
    <location>
        <position position="267"/>
    </location>
</feature>
<feature type="modified residue" description="Phosphothreonine" evidence="2">
    <location>
        <position position="316"/>
    </location>
</feature>
<feature type="sequence conflict" description="In Ref. 4; BAA00018." evidence="8" ref="4">
    <original>E</original>
    <variation>K</variation>
    <location>
        <position position="169"/>
    </location>
</feature>
<feature type="sequence conflict" description="In Ref. 3; BAB23522/BAB26674." evidence="8" ref="3">
    <original>S</original>
    <variation>R</variation>
    <location>
        <position position="186"/>
    </location>
</feature>
<feature type="sequence conflict" description="In Ref. 4; BAA00018." evidence="8" ref="4">
    <original>R</original>
    <variation>L</variation>
    <location>
        <position position="326"/>
    </location>
</feature>
<reference key="1">
    <citation type="journal article" date="2009" name="PLoS Biol.">
        <title>Lineage-specific biology revealed by a finished genome assembly of the mouse.</title>
        <authorList>
            <person name="Church D.M."/>
            <person name="Goodstadt L."/>
            <person name="Hillier L.W."/>
            <person name="Zody M.C."/>
            <person name="Goldstein S."/>
            <person name="She X."/>
            <person name="Bult C.J."/>
            <person name="Agarwala R."/>
            <person name="Cherry J.L."/>
            <person name="DiCuccio M."/>
            <person name="Hlavina W."/>
            <person name="Kapustin Y."/>
            <person name="Meric P."/>
            <person name="Maglott D."/>
            <person name="Birtle Z."/>
            <person name="Marques A.C."/>
            <person name="Graves T."/>
            <person name="Zhou S."/>
            <person name="Teague B."/>
            <person name="Potamousis K."/>
            <person name="Churas C."/>
            <person name="Place M."/>
            <person name="Herschleb J."/>
            <person name="Runnheim R."/>
            <person name="Forrest D."/>
            <person name="Amos-Landgraf J."/>
            <person name="Schwartz D.C."/>
            <person name="Cheng Z."/>
            <person name="Lindblad-Toh K."/>
            <person name="Eichler E.E."/>
            <person name="Ponting C.P."/>
        </authorList>
    </citation>
    <scope>NUCLEOTIDE SEQUENCE [LARGE SCALE GENOMIC DNA]</scope>
    <source>
        <strain>C57BL/6J</strain>
    </source>
</reference>
<reference key="2">
    <citation type="journal article" date="2004" name="Genome Res.">
        <title>The status, quality, and expansion of the NIH full-length cDNA project: the Mammalian Gene Collection (MGC).</title>
        <authorList>
            <consortium name="The MGC Project Team"/>
        </authorList>
    </citation>
    <scope>NUCLEOTIDE SEQUENCE [LARGE SCALE MRNA]</scope>
    <source>
        <tissue>Mammary gland</tissue>
    </source>
</reference>
<reference key="3">
    <citation type="journal article" date="2005" name="Science">
        <title>The transcriptional landscape of the mammalian genome.</title>
        <authorList>
            <person name="Carninci P."/>
            <person name="Kasukawa T."/>
            <person name="Katayama S."/>
            <person name="Gough J."/>
            <person name="Frith M.C."/>
            <person name="Maeda N."/>
            <person name="Oyama R."/>
            <person name="Ravasi T."/>
            <person name="Lenhard B."/>
            <person name="Wells C."/>
            <person name="Kodzius R."/>
            <person name="Shimokawa K."/>
            <person name="Bajic V.B."/>
            <person name="Brenner S.E."/>
            <person name="Batalov S."/>
            <person name="Forrest A.R."/>
            <person name="Zavolan M."/>
            <person name="Davis M.J."/>
            <person name="Wilming L.G."/>
            <person name="Aidinis V."/>
            <person name="Allen J.E."/>
            <person name="Ambesi-Impiombato A."/>
            <person name="Apweiler R."/>
            <person name="Aturaliya R.N."/>
            <person name="Bailey T.L."/>
            <person name="Bansal M."/>
            <person name="Baxter L."/>
            <person name="Beisel K.W."/>
            <person name="Bersano T."/>
            <person name="Bono H."/>
            <person name="Chalk A.M."/>
            <person name="Chiu K.P."/>
            <person name="Choudhary V."/>
            <person name="Christoffels A."/>
            <person name="Clutterbuck D.R."/>
            <person name="Crowe M.L."/>
            <person name="Dalla E."/>
            <person name="Dalrymple B.P."/>
            <person name="de Bono B."/>
            <person name="Della Gatta G."/>
            <person name="di Bernardo D."/>
            <person name="Down T."/>
            <person name="Engstrom P."/>
            <person name="Fagiolini M."/>
            <person name="Faulkner G."/>
            <person name="Fletcher C.F."/>
            <person name="Fukushima T."/>
            <person name="Furuno M."/>
            <person name="Futaki S."/>
            <person name="Gariboldi M."/>
            <person name="Georgii-Hemming P."/>
            <person name="Gingeras T.R."/>
            <person name="Gojobori T."/>
            <person name="Green R.E."/>
            <person name="Gustincich S."/>
            <person name="Harbers M."/>
            <person name="Hayashi Y."/>
            <person name="Hensch T.K."/>
            <person name="Hirokawa N."/>
            <person name="Hill D."/>
            <person name="Huminiecki L."/>
            <person name="Iacono M."/>
            <person name="Ikeo K."/>
            <person name="Iwama A."/>
            <person name="Ishikawa T."/>
            <person name="Jakt M."/>
            <person name="Kanapin A."/>
            <person name="Katoh M."/>
            <person name="Kawasawa Y."/>
            <person name="Kelso J."/>
            <person name="Kitamura H."/>
            <person name="Kitano H."/>
            <person name="Kollias G."/>
            <person name="Krishnan S.P."/>
            <person name="Kruger A."/>
            <person name="Kummerfeld S.K."/>
            <person name="Kurochkin I.V."/>
            <person name="Lareau L.F."/>
            <person name="Lazarevic D."/>
            <person name="Lipovich L."/>
            <person name="Liu J."/>
            <person name="Liuni S."/>
            <person name="McWilliam S."/>
            <person name="Madan Babu M."/>
            <person name="Madera M."/>
            <person name="Marchionni L."/>
            <person name="Matsuda H."/>
            <person name="Matsuzawa S."/>
            <person name="Miki H."/>
            <person name="Mignone F."/>
            <person name="Miyake S."/>
            <person name="Morris K."/>
            <person name="Mottagui-Tabar S."/>
            <person name="Mulder N."/>
            <person name="Nakano N."/>
            <person name="Nakauchi H."/>
            <person name="Ng P."/>
            <person name="Nilsson R."/>
            <person name="Nishiguchi S."/>
            <person name="Nishikawa S."/>
            <person name="Nori F."/>
            <person name="Ohara O."/>
            <person name="Okazaki Y."/>
            <person name="Orlando V."/>
            <person name="Pang K.C."/>
            <person name="Pavan W.J."/>
            <person name="Pavesi G."/>
            <person name="Pesole G."/>
            <person name="Petrovsky N."/>
            <person name="Piazza S."/>
            <person name="Reed J."/>
            <person name="Reid J.F."/>
            <person name="Ring B.Z."/>
            <person name="Ringwald M."/>
            <person name="Rost B."/>
            <person name="Ruan Y."/>
            <person name="Salzberg S.L."/>
            <person name="Sandelin A."/>
            <person name="Schneider C."/>
            <person name="Schoenbach C."/>
            <person name="Sekiguchi K."/>
            <person name="Semple C.A."/>
            <person name="Seno S."/>
            <person name="Sessa L."/>
            <person name="Sheng Y."/>
            <person name="Shibata Y."/>
            <person name="Shimada H."/>
            <person name="Shimada K."/>
            <person name="Silva D."/>
            <person name="Sinclair B."/>
            <person name="Sperling S."/>
            <person name="Stupka E."/>
            <person name="Sugiura K."/>
            <person name="Sultana R."/>
            <person name="Takenaka Y."/>
            <person name="Taki K."/>
            <person name="Tammoja K."/>
            <person name="Tan S.L."/>
            <person name="Tang S."/>
            <person name="Taylor M.S."/>
            <person name="Tegner J."/>
            <person name="Teichmann S.A."/>
            <person name="Ueda H.R."/>
            <person name="van Nimwegen E."/>
            <person name="Verardo R."/>
            <person name="Wei C.L."/>
            <person name="Yagi K."/>
            <person name="Yamanishi H."/>
            <person name="Zabarovsky E."/>
            <person name="Zhu S."/>
            <person name="Zimmer A."/>
            <person name="Hide W."/>
            <person name="Bult C."/>
            <person name="Grimmond S.M."/>
            <person name="Teasdale R.D."/>
            <person name="Liu E.T."/>
            <person name="Brusic V."/>
            <person name="Quackenbush J."/>
            <person name="Wahlestedt C."/>
            <person name="Mattick J.S."/>
            <person name="Hume D.A."/>
            <person name="Kai C."/>
            <person name="Sasaki D."/>
            <person name="Tomaru Y."/>
            <person name="Fukuda S."/>
            <person name="Kanamori-Katayama M."/>
            <person name="Suzuki M."/>
            <person name="Aoki J."/>
            <person name="Arakawa T."/>
            <person name="Iida J."/>
            <person name="Imamura K."/>
            <person name="Itoh M."/>
            <person name="Kato T."/>
            <person name="Kawaji H."/>
            <person name="Kawagashira N."/>
            <person name="Kawashima T."/>
            <person name="Kojima M."/>
            <person name="Kondo S."/>
            <person name="Konno H."/>
            <person name="Nakano K."/>
            <person name="Ninomiya N."/>
            <person name="Nishio T."/>
            <person name="Okada M."/>
            <person name="Plessy C."/>
            <person name="Shibata K."/>
            <person name="Shiraki T."/>
            <person name="Suzuki S."/>
            <person name="Tagami M."/>
            <person name="Waki K."/>
            <person name="Watahiki A."/>
            <person name="Okamura-Oho Y."/>
            <person name="Suzuki H."/>
            <person name="Kawai J."/>
            <person name="Hayashizaki Y."/>
        </authorList>
    </citation>
    <scope>NUCLEOTIDE SEQUENCE [LARGE SCALE MRNA] OF 1-283</scope>
    <source>
        <strain>C57BL/6J</strain>
        <tissue>Lung</tissue>
        <tissue>Tongue</tissue>
        <tissue>Urinary bladder</tissue>
    </source>
</reference>
<reference key="4">
    <citation type="journal article" date="1986" name="Mol. Cell. Biol.">
        <title>Characterization of murine A-raf, a new oncogene related to the v-raf oncogene.</title>
        <authorList>
            <person name="Huleihel M."/>
            <person name="Goldsborough M."/>
            <person name="Cleveland J."/>
            <person name="Gunnell M."/>
            <person name="Bonner T."/>
            <person name="Rapp U.R."/>
        </authorList>
    </citation>
    <scope>NUCLEOTIDE SEQUENCE [MRNA] OF 168-604</scope>
</reference>
<reference key="5">
    <citation type="journal article" date="2010" name="Cell">
        <title>A tissue-specific atlas of mouse protein phosphorylation and expression.</title>
        <authorList>
            <person name="Huttlin E.L."/>
            <person name="Jedrychowski M.P."/>
            <person name="Elias J.E."/>
            <person name="Goswami T."/>
            <person name="Rad R."/>
            <person name="Beausoleil S.A."/>
            <person name="Villen J."/>
            <person name="Haas W."/>
            <person name="Sowa M.E."/>
            <person name="Gygi S.P."/>
        </authorList>
    </citation>
    <scope>PHOSPHORYLATION [LARGE SCALE ANALYSIS] AT SER-157 AND THR-181</scope>
    <scope>IDENTIFICATION BY MASS SPECTROMETRY [LARGE SCALE ANALYSIS]</scope>
    <source>
        <tissue>Brain</tissue>
        <tissue>Kidney</tissue>
        <tissue>Liver</tissue>
        <tissue>Lung</tissue>
        <tissue>Pancreas</tissue>
        <tissue>Spleen</tissue>
        <tissue>Testis</tissue>
    </source>
</reference>
<protein>
    <recommendedName>
        <fullName>Serine/threonine-protein kinase A-Raf</fullName>
        <ecNumber>2.7.11.1</ecNumber>
    </recommendedName>
    <alternativeName>
        <fullName>Proto-oncogene A-Raf</fullName>
    </alternativeName>
</protein>
<gene>
    <name type="primary">Araf</name>
    <name type="synonym">A-raf</name>
    <name type="synonym">Araf1</name>
</gene>
<sequence length="604" mass="67581">MEPPRGPPVSGAEPSRAVGTVKVYLPNKQRTVVTVREGMSVYDSLDKALKVRGLNQDCCVVYRLIKGRKTVTAWDTAIAPLDGEELIVEVLEDVPLTMHNFVRKTFFSLAFCDFCLKFLFHGFRCQTCGYKFHQHCSSKVPTVCVDMSTNRRQFYHSIQDLSGGSRQQEAPSNLSVNELLTPQGPSPFTQQRDQEHFSFPAPANPPLQRIRSTSTPNVHMVSTTAPMDSSLMQFTAQSFSTDAAGRGGDGAPRGSPSPASVSSGRKSPHSKLPSEQRERKSLADEKKKVKNLGYRDSGYYWEVPPSEVQLLKRIGTGSFGTVFRGRWHGDVAVKVLKVAQPTAEQAQAFKNEMQVLRKTRHVNILLFMGFMTRPGFAIITQWCEGSSLYHHLHVADTRFDMVQLIDVARQTAQGMDYLHAKNIIHRDLKSNNIFLHEGLTVKIGDFGLATVKTRWSGAQPLEQPSGSVLWMAAEVIRMQDPNPYSFQSDVYAYGVVLYELMTGSLPYSHIGSRDQIIFMVGRGYLSPDLSKIFSNCPKAMRRLLTDCLKFQREERPLFPQILATIELLQRSLPKIERSASEPSLHRTQADELPACLLSAARLVP</sequence>